<gene>
    <name evidence="1" type="primary">argH</name>
    <name type="ordered locus">Glov_3145</name>
</gene>
<sequence>MSQNKLWGGRFTQPTDKFVEEFTASIDFDKRLYHQDIRGSVAHARMLGRQGIIPQQDVEQIVHGLKDILAQIEAGQFDFSVGLEDIHMNIEARLSQKIGEAGKRLHTGRSRNDQVALDIRLYLRDEIVEVVAYLDMLIDSLLEQAEKNLEVVMPGFTHLQSAQPILFSHHMLAYVEMFKRDKGRMDDCLKRVNVLPLGAGALAGTTFPIDREYVAEQLDFPAVTRNSLDSVSDRDFALEFIAASSILMMHLSRLSEELIIWSTSAFRFVDLSDGFCTGSSIMPQKKNPDVPELVRGKTGRVYGNLMALLTVMKALPLAYNKDMQEDKEPLFDTIDTVKGSLKIFADMIREMRVNSSSMGRAAGQGFSTATDVADYLVRKGLPFRDAHEAVGKAVAYCVENEMDIIDLSLAEWQLFSPHFSDDIFAAITVEASVNARDVIGGTARNRVEDEIRRCREGK</sequence>
<name>ARLY_TRIL1</name>
<protein>
    <recommendedName>
        <fullName evidence="1">Argininosuccinate lyase</fullName>
        <shortName evidence="1">ASAL</shortName>
        <ecNumber evidence="1">4.3.2.1</ecNumber>
    </recommendedName>
    <alternativeName>
        <fullName evidence="1">Arginosuccinase</fullName>
    </alternativeName>
</protein>
<dbReference type="EC" id="4.3.2.1" evidence="1"/>
<dbReference type="EMBL" id="CP001089">
    <property type="protein sequence ID" value="ACD96851.1"/>
    <property type="molecule type" value="Genomic_DNA"/>
</dbReference>
<dbReference type="RefSeq" id="WP_012471175.1">
    <property type="nucleotide sequence ID" value="NC_010814.1"/>
</dbReference>
<dbReference type="SMR" id="B3E9X6"/>
<dbReference type="STRING" id="398767.Glov_3145"/>
<dbReference type="KEGG" id="glo:Glov_3145"/>
<dbReference type="eggNOG" id="COG0165">
    <property type="taxonomic scope" value="Bacteria"/>
</dbReference>
<dbReference type="HOGENOM" id="CLU_027272_2_3_7"/>
<dbReference type="OrthoDB" id="9769623at2"/>
<dbReference type="UniPathway" id="UPA00068">
    <property type="reaction ID" value="UER00114"/>
</dbReference>
<dbReference type="Proteomes" id="UP000002420">
    <property type="component" value="Chromosome"/>
</dbReference>
<dbReference type="GO" id="GO:0005829">
    <property type="term" value="C:cytosol"/>
    <property type="evidence" value="ECO:0007669"/>
    <property type="project" value="TreeGrafter"/>
</dbReference>
<dbReference type="GO" id="GO:0004056">
    <property type="term" value="F:argininosuccinate lyase activity"/>
    <property type="evidence" value="ECO:0007669"/>
    <property type="project" value="UniProtKB-UniRule"/>
</dbReference>
<dbReference type="GO" id="GO:0042450">
    <property type="term" value="P:arginine biosynthetic process via ornithine"/>
    <property type="evidence" value="ECO:0007669"/>
    <property type="project" value="InterPro"/>
</dbReference>
<dbReference type="GO" id="GO:0006526">
    <property type="term" value="P:L-arginine biosynthetic process"/>
    <property type="evidence" value="ECO:0007669"/>
    <property type="project" value="UniProtKB-UniRule"/>
</dbReference>
<dbReference type="CDD" id="cd01359">
    <property type="entry name" value="Argininosuccinate_lyase"/>
    <property type="match status" value="1"/>
</dbReference>
<dbReference type="FunFam" id="1.10.275.10:FF:000002">
    <property type="entry name" value="Argininosuccinate lyase"/>
    <property type="match status" value="1"/>
</dbReference>
<dbReference type="FunFam" id="1.10.40.30:FF:000001">
    <property type="entry name" value="Argininosuccinate lyase"/>
    <property type="match status" value="1"/>
</dbReference>
<dbReference type="FunFam" id="1.20.200.10:FF:000002">
    <property type="entry name" value="Argininosuccinate lyase"/>
    <property type="match status" value="1"/>
</dbReference>
<dbReference type="Gene3D" id="1.10.40.30">
    <property type="entry name" value="Fumarase/aspartase (C-terminal domain)"/>
    <property type="match status" value="1"/>
</dbReference>
<dbReference type="Gene3D" id="1.20.200.10">
    <property type="entry name" value="Fumarase/aspartase (Central domain)"/>
    <property type="match status" value="1"/>
</dbReference>
<dbReference type="Gene3D" id="1.10.275.10">
    <property type="entry name" value="Fumarase/aspartase (N-terminal domain)"/>
    <property type="match status" value="1"/>
</dbReference>
<dbReference type="HAMAP" id="MF_00006">
    <property type="entry name" value="Arg_succ_lyase"/>
    <property type="match status" value="1"/>
</dbReference>
<dbReference type="InterPro" id="IPR029419">
    <property type="entry name" value="Arg_succ_lyase_C"/>
</dbReference>
<dbReference type="InterPro" id="IPR009049">
    <property type="entry name" value="Argininosuccinate_lyase"/>
</dbReference>
<dbReference type="InterPro" id="IPR024083">
    <property type="entry name" value="Fumarase/histidase_N"/>
</dbReference>
<dbReference type="InterPro" id="IPR020557">
    <property type="entry name" value="Fumarate_lyase_CS"/>
</dbReference>
<dbReference type="InterPro" id="IPR000362">
    <property type="entry name" value="Fumarate_lyase_fam"/>
</dbReference>
<dbReference type="InterPro" id="IPR022761">
    <property type="entry name" value="Fumarate_lyase_N"/>
</dbReference>
<dbReference type="InterPro" id="IPR008948">
    <property type="entry name" value="L-Aspartase-like"/>
</dbReference>
<dbReference type="NCBIfam" id="TIGR00838">
    <property type="entry name" value="argH"/>
    <property type="match status" value="1"/>
</dbReference>
<dbReference type="PANTHER" id="PTHR43814">
    <property type="entry name" value="ARGININOSUCCINATE LYASE"/>
    <property type="match status" value="1"/>
</dbReference>
<dbReference type="PANTHER" id="PTHR43814:SF1">
    <property type="entry name" value="ARGININOSUCCINATE LYASE"/>
    <property type="match status" value="1"/>
</dbReference>
<dbReference type="Pfam" id="PF14698">
    <property type="entry name" value="ASL_C2"/>
    <property type="match status" value="1"/>
</dbReference>
<dbReference type="Pfam" id="PF00206">
    <property type="entry name" value="Lyase_1"/>
    <property type="match status" value="1"/>
</dbReference>
<dbReference type="PRINTS" id="PR00145">
    <property type="entry name" value="ARGSUCLYASE"/>
</dbReference>
<dbReference type="PRINTS" id="PR00149">
    <property type="entry name" value="FUMRATELYASE"/>
</dbReference>
<dbReference type="SUPFAM" id="SSF48557">
    <property type="entry name" value="L-aspartase-like"/>
    <property type="match status" value="1"/>
</dbReference>
<dbReference type="PROSITE" id="PS00163">
    <property type="entry name" value="FUMARATE_LYASES"/>
    <property type="match status" value="1"/>
</dbReference>
<feature type="chain" id="PRO_1000089084" description="Argininosuccinate lyase">
    <location>
        <begin position="1"/>
        <end position="458"/>
    </location>
</feature>
<accession>B3E9X6</accession>
<organism>
    <name type="scientific">Trichlorobacter lovleyi (strain ATCC BAA-1151 / DSM 17278 / SZ)</name>
    <name type="common">Geobacter lovleyi</name>
    <dbReference type="NCBI Taxonomy" id="398767"/>
    <lineage>
        <taxon>Bacteria</taxon>
        <taxon>Pseudomonadati</taxon>
        <taxon>Thermodesulfobacteriota</taxon>
        <taxon>Desulfuromonadia</taxon>
        <taxon>Geobacterales</taxon>
        <taxon>Geobacteraceae</taxon>
        <taxon>Trichlorobacter</taxon>
    </lineage>
</organism>
<evidence type="ECO:0000255" key="1">
    <source>
        <dbReference type="HAMAP-Rule" id="MF_00006"/>
    </source>
</evidence>
<comment type="catalytic activity">
    <reaction evidence="1">
        <text>2-(N(omega)-L-arginino)succinate = fumarate + L-arginine</text>
        <dbReference type="Rhea" id="RHEA:24020"/>
        <dbReference type="ChEBI" id="CHEBI:29806"/>
        <dbReference type="ChEBI" id="CHEBI:32682"/>
        <dbReference type="ChEBI" id="CHEBI:57472"/>
        <dbReference type="EC" id="4.3.2.1"/>
    </reaction>
</comment>
<comment type="pathway">
    <text evidence="1">Amino-acid biosynthesis; L-arginine biosynthesis; L-arginine from L-ornithine and carbamoyl phosphate: step 3/3.</text>
</comment>
<comment type="subcellular location">
    <subcellularLocation>
        <location evidence="1">Cytoplasm</location>
    </subcellularLocation>
</comment>
<comment type="similarity">
    <text evidence="1">Belongs to the lyase 1 family. Argininosuccinate lyase subfamily.</text>
</comment>
<proteinExistence type="inferred from homology"/>
<keyword id="KW-0028">Amino-acid biosynthesis</keyword>
<keyword id="KW-0055">Arginine biosynthesis</keyword>
<keyword id="KW-0963">Cytoplasm</keyword>
<keyword id="KW-0456">Lyase</keyword>
<keyword id="KW-1185">Reference proteome</keyword>
<reference key="1">
    <citation type="submission" date="2008-05" db="EMBL/GenBank/DDBJ databases">
        <title>Complete sequence of chromosome of Geobacter lovleyi SZ.</title>
        <authorList>
            <consortium name="US DOE Joint Genome Institute"/>
            <person name="Lucas S."/>
            <person name="Copeland A."/>
            <person name="Lapidus A."/>
            <person name="Glavina del Rio T."/>
            <person name="Dalin E."/>
            <person name="Tice H."/>
            <person name="Bruce D."/>
            <person name="Goodwin L."/>
            <person name="Pitluck S."/>
            <person name="Chertkov O."/>
            <person name="Meincke L."/>
            <person name="Brettin T."/>
            <person name="Detter J.C."/>
            <person name="Han C."/>
            <person name="Tapia R."/>
            <person name="Kuske C.R."/>
            <person name="Schmutz J."/>
            <person name="Larimer F."/>
            <person name="Land M."/>
            <person name="Hauser L."/>
            <person name="Kyrpides N."/>
            <person name="Mikhailova N."/>
            <person name="Sung Y."/>
            <person name="Fletcher K.E."/>
            <person name="Ritalahti K.M."/>
            <person name="Loeffler F.E."/>
            <person name="Richardson P."/>
        </authorList>
    </citation>
    <scope>NUCLEOTIDE SEQUENCE [LARGE SCALE GENOMIC DNA]</scope>
    <source>
        <strain>ATCC BAA-1151 / DSM 17278 / SZ</strain>
    </source>
</reference>